<evidence type="ECO:0000250" key="1">
    <source>
        <dbReference type="UniProtKB" id="O07639"/>
    </source>
</evidence>
<evidence type="ECO:0000250" key="2">
    <source>
        <dbReference type="UniProtKB" id="P39604"/>
    </source>
</evidence>
<evidence type="ECO:0000255" key="3"/>
<evidence type="ECO:0000305" key="4"/>
<sequence length="415" mass="46814">MIRRFVSICIQLIEDLLIGGWNSIWYYLFPIMHPRCANWWSVARWLQWLTFLWLSIGLIVLCSASYPSAQFEFNDGLYYVKRQLLWTILGILEFNLLTRLLIKDILKISSLGIIFSFLCLLLTFPMGISVNGASRWIAIGPILLQPSEIIKPFLILQSSYIFSQWDNISYSKKIFWVILFISIIGSILIQPNLSTASLCGAIIWLVALTAGIHWFYLNSILSIGAVTALISLGSQEYQRQRIISFLNPWANPTSIGYQLVQSLLAVGSGRLTGSGISCSYQKLFYLPIQYTDFIFSVFSEEFGLLGAFLFISLLIIYFSLGMIVVLSNKSKVNRLLALGCIMVLVGQSLINIGVSVGILPTTGLPLPFFSYGGNSILATFFVSAILIRVAIETEIDNRINIFSLLNKQSIFYWFK</sequence>
<dbReference type="EC" id="2.4.99.28" evidence="1"/>
<dbReference type="EMBL" id="AF166114">
    <property type="protein sequence ID" value="AAF43874.1"/>
    <property type="molecule type" value="Genomic_DNA"/>
</dbReference>
<dbReference type="RefSeq" id="NP_038436.1">
    <property type="nucleotide sequence ID" value="NC_002186.1"/>
</dbReference>
<dbReference type="SMR" id="Q9MUM4"/>
<dbReference type="GeneID" id="800983"/>
<dbReference type="GO" id="GO:0032153">
    <property type="term" value="C:cell division site"/>
    <property type="evidence" value="ECO:0007669"/>
    <property type="project" value="TreeGrafter"/>
</dbReference>
<dbReference type="GO" id="GO:0031969">
    <property type="term" value="C:chloroplast membrane"/>
    <property type="evidence" value="ECO:0007669"/>
    <property type="project" value="UniProtKB-SubCell"/>
</dbReference>
<dbReference type="GO" id="GO:0005886">
    <property type="term" value="C:plasma membrane"/>
    <property type="evidence" value="ECO:0007669"/>
    <property type="project" value="TreeGrafter"/>
</dbReference>
<dbReference type="GO" id="GO:0015648">
    <property type="term" value="F:lipid-linked peptidoglycan transporter activity"/>
    <property type="evidence" value="ECO:0007669"/>
    <property type="project" value="TreeGrafter"/>
</dbReference>
<dbReference type="GO" id="GO:0008955">
    <property type="term" value="F:peptidoglycan glycosyltransferase activity"/>
    <property type="evidence" value="ECO:0007669"/>
    <property type="project" value="RHEA"/>
</dbReference>
<dbReference type="GO" id="GO:0051301">
    <property type="term" value="P:cell division"/>
    <property type="evidence" value="ECO:0007669"/>
    <property type="project" value="InterPro"/>
</dbReference>
<dbReference type="GO" id="GO:0008360">
    <property type="term" value="P:regulation of cell shape"/>
    <property type="evidence" value="ECO:0007669"/>
    <property type="project" value="UniProtKB-KW"/>
</dbReference>
<dbReference type="InterPro" id="IPR018365">
    <property type="entry name" value="Cell_cycle_FtsW-rel_CS"/>
</dbReference>
<dbReference type="InterPro" id="IPR001182">
    <property type="entry name" value="FtsW/RodA"/>
</dbReference>
<dbReference type="PANTHER" id="PTHR30474">
    <property type="entry name" value="CELL CYCLE PROTEIN"/>
    <property type="match status" value="1"/>
</dbReference>
<dbReference type="PANTHER" id="PTHR30474:SF2">
    <property type="entry name" value="PEPTIDOGLYCAN GLYCOSYLTRANSFERASE FTSW-RELATED"/>
    <property type="match status" value="1"/>
</dbReference>
<dbReference type="Pfam" id="PF01098">
    <property type="entry name" value="FTSW_RODA_SPOVE"/>
    <property type="match status" value="1"/>
</dbReference>
<dbReference type="PROSITE" id="PS00428">
    <property type="entry name" value="FTSW_RODA_SPOVE"/>
    <property type="match status" value="1"/>
</dbReference>
<name>FTSW_MESVI</name>
<proteinExistence type="inferred from homology"/>
<geneLocation type="chloroplast"/>
<protein>
    <recommendedName>
        <fullName evidence="1">Putative peptidoglycan glycosyltransferase FtsW</fullName>
        <shortName evidence="1">PGT</shortName>
        <ecNumber evidence="1">2.4.99.28</ecNumber>
    </recommendedName>
    <alternativeName>
        <fullName evidence="1">Peptidoglycan polymerase</fullName>
        <shortName evidence="1">PG polymerase</shortName>
    </alternativeName>
</protein>
<organism>
    <name type="scientific">Mesostigma viride</name>
    <name type="common">Green alga</name>
    <dbReference type="NCBI Taxonomy" id="41882"/>
    <lineage>
        <taxon>Eukaryota</taxon>
        <taxon>Viridiplantae</taxon>
        <taxon>Streptophyta</taxon>
        <taxon>Mesostigmatophyceae</taxon>
        <taxon>Mesostigmatales</taxon>
        <taxon>Mesostigmataceae</taxon>
        <taxon>Mesostigma</taxon>
    </lineage>
</organism>
<accession>Q9MUM4</accession>
<keyword id="KW-0133">Cell shape</keyword>
<keyword id="KW-0150">Chloroplast</keyword>
<keyword id="KW-0328">Glycosyltransferase</keyword>
<keyword id="KW-0472">Membrane</keyword>
<keyword id="KW-0573">Peptidoglycan synthesis</keyword>
<keyword id="KW-0934">Plastid</keyword>
<keyword id="KW-0808">Transferase</keyword>
<keyword id="KW-0812">Transmembrane</keyword>
<keyword id="KW-1133">Transmembrane helix</keyword>
<gene>
    <name type="primary">ftsW</name>
</gene>
<comment type="function">
    <text>Could play a role in chloroplast division/peptidoglycan biosynthesis.</text>
</comment>
<comment type="catalytic activity">
    <reaction evidence="2">
        <text>[GlcNAc-(1-&gt;4)-Mur2Ac(oyl-L-Ala-gamma-D-Glu-L-Lys-D-Ala-D-Ala)](n)-di-trans,octa-cis-undecaprenyl diphosphate + beta-D-GlcNAc-(1-&gt;4)-Mur2Ac(oyl-L-Ala-gamma-D-Glu-L-Lys-D-Ala-D-Ala)-di-trans,octa-cis-undecaprenyl diphosphate = [GlcNAc-(1-&gt;4)-Mur2Ac(oyl-L-Ala-gamma-D-Glu-L-Lys-D-Ala-D-Ala)](n+1)-di-trans,octa-cis-undecaprenyl diphosphate + di-trans,octa-cis-undecaprenyl diphosphate + H(+)</text>
        <dbReference type="Rhea" id="RHEA:23708"/>
        <dbReference type="Rhea" id="RHEA-COMP:9602"/>
        <dbReference type="Rhea" id="RHEA-COMP:9603"/>
        <dbReference type="ChEBI" id="CHEBI:15378"/>
        <dbReference type="ChEBI" id="CHEBI:58405"/>
        <dbReference type="ChEBI" id="CHEBI:60033"/>
        <dbReference type="ChEBI" id="CHEBI:78435"/>
        <dbReference type="EC" id="2.4.99.28"/>
    </reaction>
</comment>
<comment type="subcellular location">
    <subcellularLocation>
        <location evidence="4">Plastid</location>
        <location evidence="4">Chloroplast membrane</location>
        <topology evidence="4">Multi-pass membrane protein</topology>
    </subcellularLocation>
</comment>
<comment type="similarity">
    <text evidence="4">Belongs to the SEDS family.</text>
</comment>
<feature type="chain" id="PRO_0000062714" description="Putative peptidoglycan glycosyltransferase FtsW">
    <location>
        <begin position="1"/>
        <end position="415"/>
    </location>
</feature>
<feature type="transmembrane region" description="Helical" evidence="3">
    <location>
        <begin position="12"/>
        <end position="32"/>
    </location>
</feature>
<feature type="transmembrane region" description="Helical" evidence="3">
    <location>
        <begin position="45"/>
        <end position="65"/>
    </location>
</feature>
<feature type="transmembrane region" description="Helical" evidence="3">
    <location>
        <begin position="85"/>
        <end position="105"/>
    </location>
</feature>
<feature type="transmembrane region" description="Helical" evidence="3">
    <location>
        <begin position="108"/>
        <end position="128"/>
    </location>
</feature>
<feature type="transmembrane region" description="Helical" evidence="3">
    <location>
        <begin position="136"/>
        <end position="156"/>
    </location>
</feature>
<feature type="transmembrane region" description="Helical" evidence="3">
    <location>
        <begin position="174"/>
        <end position="194"/>
    </location>
</feature>
<feature type="transmembrane region" description="Helical" evidence="3">
    <location>
        <begin position="197"/>
        <end position="217"/>
    </location>
</feature>
<feature type="transmembrane region" description="Helical" evidence="3">
    <location>
        <begin position="283"/>
        <end position="303"/>
    </location>
</feature>
<feature type="transmembrane region" description="Helical" evidence="3">
    <location>
        <begin position="306"/>
        <end position="326"/>
    </location>
</feature>
<feature type="transmembrane region" description="Helical" evidence="3">
    <location>
        <begin position="338"/>
        <end position="358"/>
    </location>
</feature>
<feature type="transmembrane region" description="Helical" evidence="3">
    <location>
        <begin position="367"/>
        <end position="387"/>
    </location>
</feature>
<reference key="1">
    <citation type="journal article" date="2000" name="Nature">
        <title>Ancestral chloroplast genome in Mesostigma viride reveals an early branch of green plant evolution.</title>
        <authorList>
            <person name="Lemieux C."/>
            <person name="Otis C."/>
            <person name="Turmel M."/>
        </authorList>
    </citation>
    <scope>NUCLEOTIDE SEQUENCE [LARGE SCALE GENOMIC DNA]</scope>
    <source>
        <strain>NIES-296 / KY-14 / CCMP 2046</strain>
    </source>
</reference>